<sequence>MSDNEDNFDGDDFDDVEEDEGLDDLENAEEEGQENVEILPSGERPQANQKRITTPYMTKYERARVLGTRALQIAMCAPVMVELEGETDPLLIAMKELKARKIPIIIRRYLPDGSYEDWGVDELIITD</sequence>
<feature type="initiator methionine" description="Removed" evidence="21">
    <location>
        <position position="1"/>
    </location>
</feature>
<feature type="chain" id="PRO_0000133799" description="DNA-directed RNA polymerases I, II, and III subunit RPABC2">
    <location>
        <begin position="2"/>
        <end position="127"/>
    </location>
</feature>
<feature type="region of interest" description="Disordered" evidence="3">
    <location>
        <begin position="1"/>
        <end position="53"/>
    </location>
</feature>
<feature type="compositionally biased region" description="Acidic residues" evidence="3">
    <location>
        <begin position="1"/>
        <end position="34"/>
    </location>
</feature>
<feature type="modified residue" description="N-acetylserine" evidence="21">
    <location>
        <position position="2"/>
    </location>
</feature>
<feature type="modified residue" description="Phosphoserine; by CK2" evidence="1">
    <location>
        <position position="2"/>
    </location>
</feature>
<feature type="sequence variant" id="VAR_036571" description="In a breast cancer sample; somatic mutation." evidence="4">
    <original>Y</original>
    <variation>N</variation>
    <location>
        <position position="60"/>
    </location>
</feature>
<feature type="helix" evidence="24">
    <location>
        <begin position="3"/>
        <end position="6"/>
    </location>
</feature>
<feature type="strand" evidence="22">
    <location>
        <begin position="10"/>
        <end position="12"/>
    </location>
</feature>
<feature type="strand" evidence="25">
    <location>
        <begin position="14"/>
        <end position="16"/>
    </location>
</feature>
<feature type="strand" evidence="22">
    <location>
        <begin position="26"/>
        <end position="28"/>
    </location>
</feature>
<feature type="strand" evidence="22">
    <location>
        <begin position="35"/>
        <end position="40"/>
    </location>
</feature>
<feature type="strand" evidence="25">
    <location>
        <begin position="41"/>
        <end position="43"/>
    </location>
</feature>
<feature type="strand" evidence="25">
    <location>
        <begin position="55"/>
        <end position="57"/>
    </location>
</feature>
<feature type="helix" evidence="26">
    <location>
        <begin position="59"/>
        <end position="74"/>
    </location>
</feature>
<feature type="strand" evidence="22">
    <location>
        <begin position="78"/>
        <end position="81"/>
    </location>
</feature>
<feature type="turn" evidence="22">
    <location>
        <begin position="83"/>
        <end position="85"/>
    </location>
</feature>
<feature type="helix" evidence="26">
    <location>
        <begin position="89"/>
        <end position="98"/>
    </location>
</feature>
<feature type="strand" evidence="26">
    <location>
        <begin position="105"/>
        <end position="108"/>
    </location>
</feature>
<feature type="strand" evidence="23">
    <location>
        <begin position="111"/>
        <end position="113"/>
    </location>
</feature>
<feature type="strand" evidence="26">
    <location>
        <begin position="117"/>
        <end position="119"/>
    </location>
</feature>
<feature type="helix" evidence="26">
    <location>
        <begin position="120"/>
        <end position="122"/>
    </location>
</feature>
<feature type="strand" evidence="24">
    <location>
        <begin position="123"/>
        <end position="125"/>
    </location>
</feature>
<protein>
    <recommendedName>
        <fullName>DNA-directed RNA polymerases I, II, and III subunit RPABC2</fullName>
        <shortName>RNA polymerases I, II, and III subunit ABC2</shortName>
    </recommendedName>
    <alternativeName>
        <fullName>DNA-directed RNA polymerase II subunit F</fullName>
    </alternativeName>
    <alternativeName>
        <fullName>DNA-directed RNA polymerases I, II, and III 14.4 kDa polypeptide</fullName>
    </alternativeName>
    <alternativeName>
        <fullName>RPABC14.4</fullName>
        <shortName>RPB14.4</shortName>
    </alternativeName>
    <alternativeName>
        <fullName>RPB6 homolog</fullName>
    </alternativeName>
    <alternativeName>
        <fullName>RPC15</fullName>
    </alternativeName>
</protein>
<accession>P61218</accession>
<accession>P41584</accession>
<accession>Q6IAY3</accession>
<proteinExistence type="evidence at protein level"/>
<keyword id="KW-0002">3D-structure</keyword>
<keyword id="KW-0007">Acetylation</keyword>
<keyword id="KW-0240">DNA-directed RNA polymerase</keyword>
<keyword id="KW-0539">Nucleus</keyword>
<keyword id="KW-0597">Phosphoprotein</keyword>
<keyword id="KW-1267">Proteomics identification</keyword>
<keyword id="KW-1185">Reference proteome</keyword>
<keyword id="KW-0804">Transcription</keyword>
<name>RPAB2_HUMAN</name>
<organism>
    <name type="scientific">Homo sapiens</name>
    <name type="common">Human</name>
    <dbReference type="NCBI Taxonomy" id="9606"/>
    <lineage>
        <taxon>Eukaryota</taxon>
        <taxon>Metazoa</taxon>
        <taxon>Chordata</taxon>
        <taxon>Craniata</taxon>
        <taxon>Vertebrata</taxon>
        <taxon>Euteleostomi</taxon>
        <taxon>Mammalia</taxon>
        <taxon>Eutheria</taxon>
        <taxon>Euarchontoglires</taxon>
        <taxon>Primates</taxon>
        <taxon>Haplorrhini</taxon>
        <taxon>Catarrhini</taxon>
        <taxon>Hominidae</taxon>
        <taxon>Homo</taxon>
    </lineage>
</organism>
<dbReference type="EMBL" id="Z27113">
    <property type="protein sequence ID" value="CAA81629.1"/>
    <property type="molecule type" value="Genomic_DNA"/>
</dbReference>
<dbReference type="EMBL" id="AF006501">
    <property type="status" value="NOT_ANNOTATED_CDS"/>
    <property type="molecule type" value="Genomic_DNA"/>
</dbReference>
<dbReference type="EMBL" id="CR456546">
    <property type="protein sequence ID" value="CAG30432.1"/>
    <property type="molecule type" value="mRNA"/>
</dbReference>
<dbReference type="EMBL" id="CR457021">
    <property type="protein sequence ID" value="CAG33302.1"/>
    <property type="molecule type" value="mRNA"/>
</dbReference>
<dbReference type="EMBL" id="AL031587">
    <property type="status" value="NOT_ANNOTATED_CDS"/>
    <property type="molecule type" value="Genomic_DNA"/>
</dbReference>
<dbReference type="EMBL" id="CH471095">
    <property type="protein sequence ID" value="EAW60203.1"/>
    <property type="molecule type" value="Genomic_DNA"/>
</dbReference>
<dbReference type="EMBL" id="BC003582">
    <property type="protein sequence ID" value="AAH03582.1"/>
    <property type="molecule type" value="mRNA"/>
</dbReference>
<dbReference type="CCDS" id="CCDS13963.1"/>
<dbReference type="PIR" id="I38175">
    <property type="entry name" value="S38627"/>
</dbReference>
<dbReference type="RefSeq" id="NP_068809.1">
    <property type="nucleotide sequence ID" value="NM_021974.5"/>
</dbReference>
<dbReference type="PDB" id="1QKL">
    <property type="method" value="NMR"/>
    <property type="chains" value="A=1-127"/>
</dbReference>
<dbReference type="PDB" id="5IY6">
    <property type="method" value="EM"/>
    <property type="resolution" value="7.20 A"/>
    <property type="chains" value="F=1-127"/>
</dbReference>
<dbReference type="PDB" id="5IY7">
    <property type="method" value="EM"/>
    <property type="resolution" value="8.60 A"/>
    <property type="chains" value="F=1-127"/>
</dbReference>
<dbReference type="PDB" id="5IY8">
    <property type="method" value="EM"/>
    <property type="resolution" value="7.90 A"/>
    <property type="chains" value="F=1-127"/>
</dbReference>
<dbReference type="PDB" id="5IY9">
    <property type="method" value="EM"/>
    <property type="resolution" value="6.30 A"/>
    <property type="chains" value="F=1-127"/>
</dbReference>
<dbReference type="PDB" id="5IYA">
    <property type="method" value="EM"/>
    <property type="resolution" value="5.40 A"/>
    <property type="chains" value="F=1-127"/>
</dbReference>
<dbReference type="PDB" id="5IYB">
    <property type="method" value="EM"/>
    <property type="resolution" value="3.90 A"/>
    <property type="chains" value="F=1-127"/>
</dbReference>
<dbReference type="PDB" id="5IYC">
    <property type="method" value="EM"/>
    <property type="resolution" value="3.90 A"/>
    <property type="chains" value="F=1-127"/>
</dbReference>
<dbReference type="PDB" id="5IYD">
    <property type="method" value="EM"/>
    <property type="resolution" value="3.90 A"/>
    <property type="chains" value="F=1-127"/>
</dbReference>
<dbReference type="PDB" id="6DRD">
    <property type="method" value="EM"/>
    <property type="resolution" value="3.90 A"/>
    <property type="chains" value="F=1-127"/>
</dbReference>
<dbReference type="PDB" id="6O9L">
    <property type="method" value="EM"/>
    <property type="resolution" value="7.20 A"/>
    <property type="chains" value="F=1-127"/>
</dbReference>
<dbReference type="PDB" id="6XRE">
    <property type="method" value="EM"/>
    <property type="resolution" value="4.60 A"/>
    <property type="chains" value="F=1-127"/>
</dbReference>
<dbReference type="PDB" id="7A6H">
    <property type="method" value="EM"/>
    <property type="resolution" value="3.30 A"/>
    <property type="chains" value="F=1-127"/>
</dbReference>
<dbReference type="PDB" id="7AE1">
    <property type="method" value="EM"/>
    <property type="resolution" value="2.80 A"/>
    <property type="chains" value="F=1-127"/>
</dbReference>
<dbReference type="PDB" id="7AE3">
    <property type="method" value="EM"/>
    <property type="resolution" value="3.10 A"/>
    <property type="chains" value="F=1-127"/>
</dbReference>
<dbReference type="PDB" id="7AEA">
    <property type="method" value="EM"/>
    <property type="resolution" value="3.40 A"/>
    <property type="chains" value="F=1-127"/>
</dbReference>
<dbReference type="PDB" id="7AST">
    <property type="method" value="EM"/>
    <property type="resolution" value="4.00 A"/>
    <property type="chains" value="E=1-127"/>
</dbReference>
<dbReference type="PDB" id="7D58">
    <property type="method" value="EM"/>
    <property type="resolution" value="2.90 A"/>
    <property type="chains" value="F=1-127"/>
</dbReference>
<dbReference type="PDB" id="7D59">
    <property type="method" value="EM"/>
    <property type="resolution" value="3.10 A"/>
    <property type="chains" value="F=1-127"/>
</dbReference>
<dbReference type="PDB" id="7DN3">
    <property type="method" value="EM"/>
    <property type="resolution" value="3.50 A"/>
    <property type="chains" value="F=1-127"/>
</dbReference>
<dbReference type="PDB" id="7DTH">
    <property type="method" value="NMR"/>
    <property type="chains" value="A=1-127"/>
</dbReference>
<dbReference type="PDB" id="7DTI">
    <property type="method" value="NMR"/>
    <property type="chains" value="A=1-127"/>
</dbReference>
<dbReference type="PDB" id="7DU2">
    <property type="method" value="EM"/>
    <property type="resolution" value="3.35 A"/>
    <property type="chains" value="F=1-127"/>
</dbReference>
<dbReference type="PDB" id="7FJI">
    <property type="method" value="EM"/>
    <property type="resolution" value="3.60 A"/>
    <property type="chains" value="F=1-127"/>
</dbReference>
<dbReference type="PDB" id="7FJJ">
    <property type="method" value="EM"/>
    <property type="resolution" value="3.60 A"/>
    <property type="chains" value="F=1-127"/>
</dbReference>
<dbReference type="PDB" id="7LBM">
    <property type="method" value="EM"/>
    <property type="resolution" value="4.80 A"/>
    <property type="chains" value="F=1-127"/>
</dbReference>
<dbReference type="PDB" id="7OB9">
    <property type="method" value="EM"/>
    <property type="resolution" value="2.70 A"/>
    <property type="chains" value="F=1-127"/>
</dbReference>
<dbReference type="PDB" id="7OBA">
    <property type="method" value="EM"/>
    <property type="resolution" value="3.10 A"/>
    <property type="chains" value="F=1-127"/>
</dbReference>
<dbReference type="PDB" id="7OBB">
    <property type="method" value="EM"/>
    <property type="resolution" value="3.30 A"/>
    <property type="chains" value="F=1-127"/>
</dbReference>
<dbReference type="PDB" id="7VBA">
    <property type="method" value="EM"/>
    <property type="resolution" value="2.89 A"/>
    <property type="chains" value="F=1-127"/>
</dbReference>
<dbReference type="PDB" id="7VBB">
    <property type="method" value="EM"/>
    <property type="resolution" value="2.81 A"/>
    <property type="chains" value="F=1-127"/>
</dbReference>
<dbReference type="PDB" id="7VBC">
    <property type="method" value="EM"/>
    <property type="resolution" value="3.01 A"/>
    <property type="chains" value="F=1-127"/>
</dbReference>
<dbReference type="PDB" id="8A43">
    <property type="method" value="EM"/>
    <property type="resolution" value="4.09 A"/>
    <property type="chains" value="F=1-127"/>
</dbReference>
<dbReference type="PDB" id="8ITY">
    <property type="method" value="EM"/>
    <property type="resolution" value="3.90 A"/>
    <property type="chains" value="F=1-127"/>
</dbReference>
<dbReference type="PDB" id="8IUE">
    <property type="method" value="EM"/>
    <property type="resolution" value="4.10 A"/>
    <property type="chains" value="F=1-127"/>
</dbReference>
<dbReference type="PDB" id="8IUH">
    <property type="method" value="EM"/>
    <property type="resolution" value="3.40 A"/>
    <property type="chains" value="F=1-127"/>
</dbReference>
<dbReference type="PDB" id="9EHZ">
    <property type="method" value="EM"/>
    <property type="resolution" value="2.60 A"/>
    <property type="chains" value="F=1-127"/>
</dbReference>
<dbReference type="PDB" id="9EI1">
    <property type="method" value="EM"/>
    <property type="resolution" value="3.20 A"/>
    <property type="chains" value="F=1-127"/>
</dbReference>
<dbReference type="PDB" id="9EI3">
    <property type="method" value="EM"/>
    <property type="resolution" value="3.20 A"/>
    <property type="chains" value="F=1-127"/>
</dbReference>
<dbReference type="PDB" id="9EI4">
    <property type="method" value="EM"/>
    <property type="resolution" value="3.70 A"/>
    <property type="chains" value="F=1-127"/>
</dbReference>
<dbReference type="PDB" id="9FSO">
    <property type="method" value="EM"/>
    <property type="resolution" value="3.28 A"/>
    <property type="chains" value="N=1-127"/>
</dbReference>
<dbReference type="PDB" id="9FSP">
    <property type="method" value="EM"/>
    <property type="resolution" value="3.39 A"/>
    <property type="chains" value="N=1-127"/>
</dbReference>
<dbReference type="PDB" id="9FSQ">
    <property type="method" value="EM"/>
    <property type="resolution" value="3.51 A"/>
    <property type="chains" value="N=1-127"/>
</dbReference>
<dbReference type="PDB" id="9FSR">
    <property type="method" value="EM"/>
    <property type="resolution" value="3.76 A"/>
    <property type="chains" value="N=1-127"/>
</dbReference>
<dbReference type="PDB" id="9FSS">
    <property type="method" value="EM"/>
    <property type="resolution" value="4.14 A"/>
    <property type="chains" value="N=1-127"/>
</dbReference>
<dbReference type="PDBsum" id="1QKL"/>
<dbReference type="PDBsum" id="5IY6"/>
<dbReference type="PDBsum" id="5IY7"/>
<dbReference type="PDBsum" id="5IY8"/>
<dbReference type="PDBsum" id="5IY9"/>
<dbReference type="PDBsum" id="5IYA"/>
<dbReference type="PDBsum" id="5IYB"/>
<dbReference type="PDBsum" id="5IYC"/>
<dbReference type="PDBsum" id="5IYD"/>
<dbReference type="PDBsum" id="6DRD"/>
<dbReference type="PDBsum" id="6O9L"/>
<dbReference type="PDBsum" id="6XRE"/>
<dbReference type="PDBsum" id="7A6H"/>
<dbReference type="PDBsum" id="7AE1"/>
<dbReference type="PDBsum" id="7AE3"/>
<dbReference type="PDBsum" id="7AEA"/>
<dbReference type="PDBsum" id="7AST"/>
<dbReference type="PDBsum" id="7D58"/>
<dbReference type="PDBsum" id="7D59"/>
<dbReference type="PDBsum" id="7DN3"/>
<dbReference type="PDBsum" id="7DTH"/>
<dbReference type="PDBsum" id="7DTI"/>
<dbReference type="PDBsum" id="7DU2"/>
<dbReference type="PDBsum" id="7FJI"/>
<dbReference type="PDBsum" id="7FJJ"/>
<dbReference type="PDBsum" id="7LBM"/>
<dbReference type="PDBsum" id="7OB9"/>
<dbReference type="PDBsum" id="7OBA"/>
<dbReference type="PDBsum" id="7OBB"/>
<dbReference type="PDBsum" id="7VBA"/>
<dbReference type="PDBsum" id="7VBB"/>
<dbReference type="PDBsum" id="7VBC"/>
<dbReference type="PDBsum" id="8A43"/>
<dbReference type="PDBsum" id="8ITY"/>
<dbReference type="PDBsum" id="8IUE"/>
<dbReference type="PDBsum" id="8IUH"/>
<dbReference type="PDBsum" id="9EHZ"/>
<dbReference type="PDBsum" id="9EI1"/>
<dbReference type="PDBsum" id="9EI3"/>
<dbReference type="PDBsum" id="9EI4"/>
<dbReference type="PDBsum" id="9FSO"/>
<dbReference type="PDBsum" id="9FSP"/>
<dbReference type="PDBsum" id="9FSQ"/>
<dbReference type="PDBsum" id="9FSR"/>
<dbReference type="PDBsum" id="9FSS"/>
<dbReference type="EMDB" id="EMD-11673"/>
<dbReference type="EMDB" id="EMD-11736"/>
<dbReference type="EMDB" id="EMD-11738"/>
<dbReference type="EMDB" id="EMD-11742"/>
<dbReference type="EMDB" id="EMD-11904"/>
<dbReference type="EMDB" id="EMD-12795"/>
<dbReference type="EMDB" id="EMD-12796"/>
<dbReference type="EMDB" id="EMD-12797"/>
<dbReference type="EMDB" id="EMD-15135"/>
<dbReference type="EMDB" id="EMD-22294"/>
<dbReference type="EMDB" id="EMD-23255"/>
<dbReference type="EMDB" id="EMD-30577"/>
<dbReference type="EMDB" id="EMD-30578"/>
<dbReference type="EMDB" id="EMD-30779"/>
<dbReference type="EMDB" id="EMD-30865"/>
<dbReference type="EMDB" id="EMD-31621"/>
<dbReference type="EMDB" id="EMD-31622"/>
<dbReference type="EMDB" id="EMD-31876"/>
<dbReference type="EMDB" id="EMD-31877"/>
<dbReference type="EMDB" id="EMD-31878"/>
<dbReference type="EMDB" id="EMD-35712"/>
<dbReference type="EMDB" id="EMD-35719"/>
<dbReference type="EMDB" id="EMD-35722"/>
<dbReference type="EMDB" id="EMD-48071"/>
<dbReference type="EMDB" id="EMD-48073"/>
<dbReference type="EMDB" id="EMD-48075"/>
<dbReference type="EMDB" id="EMD-48076"/>
<dbReference type="EMDB" id="EMD-50730"/>
<dbReference type="EMDB" id="EMD-50731"/>
<dbReference type="EMDB" id="EMD-50732"/>
<dbReference type="EMDB" id="EMD-50733"/>
<dbReference type="EMDB" id="EMD-50734"/>
<dbReference type="EMDB" id="EMD-7997"/>
<dbReference type="EMDB" id="EMD-8132"/>
<dbReference type="EMDB" id="EMD-8133"/>
<dbReference type="EMDB" id="EMD-8134"/>
<dbReference type="EMDB" id="EMD-8135"/>
<dbReference type="EMDB" id="EMD-8136"/>
<dbReference type="EMDB" id="EMD-8137"/>
<dbReference type="EMDB" id="EMD-8138"/>
<dbReference type="SMR" id="P61218"/>
<dbReference type="BioGRID" id="111431">
    <property type="interactions" value="146"/>
</dbReference>
<dbReference type="ComplexPortal" id="CPX-2386">
    <property type="entry name" value="DNA-directed RNA polymerase I complex"/>
</dbReference>
<dbReference type="ComplexPortal" id="CPX-2387">
    <property type="entry name" value="DNA-directed RNA polymerase II complex, Pol II(G) variant"/>
</dbReference>
<dbReference type="ComplexPortal" id="CPX-2393">
    <property type="entry name" value="DNA-directed RNA polymerase III complex, POLR3G variant"/>
</dbReference>
<dbReference type="ComplexPortal" id="CPX-7481">
    <property type="entry name" value="DNA-directed RNA polymerase II complex"/>
</dbReference>
<dbReference type="ComplexPortal" id="CPX-7482">
    <property type="entry name" value="DNA-directed RNA polymerase III complex, POLR3GL variant"/>
</dbReference>
<dbReference type="CORUM" id="P61218"/>
<dbReference type="DIP" id="DIP-32915N"/>
<dbReference type="FunCoup" id="P61218">
    <property type="interactions" value="2006"/>
</dbReference>
<dbReference type="IntAct" id="P61218">
    <property type="interactions" value="122"/>
</dbReference>
<dbReference type="MINT" id="P61218"/>
<dbReference type="STRING" id="9606.ENSP00000385725"/>
<dbReference type="iPTMnet" id="P61218"/>
<dbReference type="PhosphoSitePlus" id="P61218"/>
<dbReference type="SwissPalm" id="P61218"/>
<dbReference type="BioMuta" id="POLR2F"/>
<dbReference type="DMDM" id="47117761"/>
<dbReference type="jPOST" id="P61218"/>
<dbReference type="MassIVE" id="P61218"/>
<dbReference type="PaxDb" id="9606-ENSP00000403852"/>
<dbReference type="PeptideAtlas" id="P61218"/>
<dbReference type="ProteomicsDB" id="57275"/>
<dbReference type="Pumba" id="P61218"/>
<dbReference type="Antibodypedia" id="227">
    <property type="antibodies" value="134 antibodies from 26 providers"/>
</dbReference>
<dbReference type="DNASU" id="5435"/>
<dbReference type="Ensembl" id="ENST00000442738.7">
    <property type="protein sequence ID" value="ENSP00000403852.2"/>
    <property type="gene ID" value="ENSG00000100142.16"/>
</dbReference>
<dbReference type="GeneID" id="5435"/>
<dbReference type="KEGG" id="hsa:5435"/>
<dbReference type="MANE-Select" id="ENST00000442738.7">
    <property type="protein sequence ID" value="ENSP00000403852.2"/>
    <property type="RefSeq nucleotide sequence ID" value="NM_021974.5"/>
    <property type="RefSeq protein sequence ID" value="NP_068809.1"/>
</dbReference>
<dbReference type="UCSC" id="uc003aul.4">
    <property type="organism name" value="human"/>
</dbReference>
<dbReference type="AGR" id="HGNC:9193"/>
<dbReference type="CTD" id="5435"/>
<dbReference type="DisGeNET" id="5435"/>
<dbReference type="GeneCards" id="POLR2F"/>
<dbReference type="HGNC" id="HGNC:9193">
    <property type="gene designation" value="POLR2F"/>
</dbReference>
<dbReference type="HPA" id="ENSG00000100142">
    <property type="expression patterns" value="Low tissue specificity"/>
</dbReference>
<dbReference type="MalaCards" id="POLR2F"/>
<dbReference type="MIM" id="604414">
    <property type="type" value="gene"/>
</dbReference>
<dbReference type="neXtProt" id="NX_P61218"/>
<dbReference type="OpenTargets" id="ENSG00000100142"/>
<dbReference type="PharmGKB" id="PA33513"/>
<dbReference type="VEuPathDB" id="HostDB:ENSG00000100142"/>
<dbReference type="eggNOG" id="KOG3405">
    <property type="taxonomic scope" value="Eukaryota"/>
</dbReference>
<dbReference type="GeneTree" id="ENSGT00390000010415"/>
<dbReference type="InParanoid" id="P61218"/>
<dbReference type="OMA" id="TYMTKYE"/>
<dbReference type="OrthoDB" id="259769at2759"/>
<dbReference type="PAN-GO" id="P61218">
    <property type="GO annotations" value="4 GO annotations based on evolutionary models"/>
</dbReference>
<dbReference type="PhylomeDB" id="P61218"/>
<dbReference type="TreeFam" id="TF103041"/>
<dbReference type="PathwayCommons" id="P61218"/>
<dbReference type="Reactome" id="R-HSA-112382">
    <property type="pathway name" value="Formation of RNA Pol II elongation complex"/>
</dbReference>
<dbReference type="Reactome" id="R-HSA-113418">
    <property type="pathway name" value="Formation of the Early Elongation Complex"/>
</dbReference>
<dbReference type="Reactome" id="R-HSA-167152">
    <property type="pathway name" value="Formation of HIV elongation complex in the absence of HIV Tat"/>
</dbReference>
<dbReference type="Reactome" id="R-HSA-167158">
    <property type="pathway name" value="Formation of the HIV-1 Early Elongation Complex"/>
</dbReference>
<dbReference type="Reactome" id="R-HSA-167160">
    <property type="pathway name" value="RNA Pol II CTD phosphorylation and interaction with CE during HIV infection"/>
</dbReference>
<dbReference type="Reactome" id="R-HSA-167161">
    <property type="pathway name" value="HIV Transcription Initiation"/>
</dbReference>
<dbReference type="Reactome" id="R-HSA-167162">
    <property type="pathway name" value="RNA Polymerase II HIV Promoter Escape"/>
</dbReference>
<dbReference type="Reactome" id="R-HSA-167172">
    <property type="pathway name" value="Transcription of the HIV genome"/>
</dbReference>
<dbReference type="Reactome" id="R-HSA-167200">
    <property type="pathway name" value="Formation of HIV-1 elongation complex containing HIV-1 Tat"/>
</dbReference>
<dbReference type="Reactome" id="R-HSA-167238">
    <property type="pathway name" value="Pausing and recovery of Tat-mediated HIV elongation"/>
</dbReference>
<dbReference type="Reactome" id="R-HSA-167242">
    <property type="pathway name" value="Abortive elongation of HIV-1 transcript in the absence of Tat"/>
</dbReference>
<dbReference type="Reactome" id="R-HSA-167243">
    <property type="pathway name" value="Tat-mediated HIV elongation arrest and recovery"/>
</dbReference>
<dbReference type="Reactome" id="R-HSA-167246">
    <property type="pathway name" value="Tat-mediated elongation of the HIV-1 transcript"/>
</dbReference>
<dbReference type="Reactome" id="R-HSA-167287">
    <property type="pathway name" value="HIV elongation arrest and recovery"/>
</dbReference>
<dbReference type="Reactome" id="R-HSA-167290">
    <property type="pathway name" value="Pausing and recovery of HIV elongation"/>
</dbReference>
<dbReference type="Reactome" id="R-HSA-168325">
    <property type="pathway name" value="Viral Messenger RNA Synthesis"/>
</dbReference>
<dbReference type="Reactome" id="R-HSA-1834949">
    <property type="pathway name" value="Cytosolic sensors of pathogen-associated DNA"/>
</dbReference>
<dbReference type="Reactome" id="R-HSA-203927">
    <property type="pathway name" value="MicroRNA (miRNA) biogenesis"/>
</dbReference>
<dbReference type="Reactome" id="R-HSA-427413">
    <property type="pathway name" value="NoRC negatively regulates rRNA expression"/>
</dbReference>
<dbReference type="Reactome" id="R-HSA-5250924">
    <property type="pathway name" value="B-WICH complex positively regulates rRNA expression"/>
</dbReference>
<dbReference type="Reactome" id="R-HSA-5578749">
    <property type="pathway name" value="Transcriptional regulation by small RNAs"/>
</dbReference>
<dbReference type="Reactome" id="R-HSA-5601884">
    <property type="pathway name" value="PIWI-interacting RNA (piRNA) biogenesis"/>
</dbReference>
<dbReference type="Reactome" id="R-HSA-5617472">
    <property type="pathway name" value="Activation of anterior HOX genes in hindbrain development during early embryogenesis"/>
</dbReference>
<dbReference type="Reactome" id="R-HSA-674695">
    <property type="pathway name" value="RNA Polymerase II Pre-transcription Events"/>
</dbReference>
<dbReference type="Reactome" id="R-HSA-6781823">
    <property type="pathway name" value="Formation of TC-NER Pre-Incision Complex"/>
</dbReference>
<dbReference type="Reactome" id="R-HSA-6781827">
    <property type="pathway name" value="Transcription-Coupled Nucleotide Excision Repair (TC-NER)"/>
</dbReference>
<dbReference type="Reactome" id="R-HSA-6782135">
    <property type="pathway name" value="Dual incision in TC-NER"/>
</dbReference>
<dbReference type="Reactome" id="R-HSA-6782210">
    <property type="pathway name" value="Gap-filling DNA repair synthesis and ligation in TC-NER"/>
</dbReference>
<dbReference type="Reactome" id="R-HSA-6796648">
    <property type="pathway name" value="TP53 Regulates Transcription of DNA Repair Genes"/>
</dbReference>
<dbReference type="Reactome" id="R-HSA-6803529">
    <property type="pathway name" value="FGFR2 alternative splicing"/>
</dbReference>
<dbReference type="Reactome" id="R-HSA-6807505">
    <property type="pathway name" value="RNA polymerase II transcribes snRNA genes"/>
</dbReference>
<dbReference type="Reactome" id="R-HSA-72086">
    <property type="pathway name" value="mRNA Capping"/>
</dbReference>
<dbReference type="Reactome" id="R-HSA-72163">
    <property type="pathway name" value="mRNA Splicing - Major Pathway"/>
</dbReference>
<dbReference type="Reactome" id="R-HSA-72165">
    <property type="pathway name" value="mRNA Splicing - Minor Pathway"/>
</dbReference>
<dbReference type="Reactome" id="R-HSA-72203">
    <property type="pathway name" value="Processing of Capped Intron-Containing Pre-mRNA"/>
</dbReference>
<dbReference type="Reactome" id="R-HSA-73762">
    <property type="pathway name" value="RNA Polymerase I Transcription Initiation"/>
</dbReference>
<dbReference type="Reactome" id="R-HSA-73772">
    <property type="pathway name" value="RNA Polymerase I Promoter Escape"/>
</dbReference>
<dbReference type="Reactome" id="R-HSA-73776">
    <property type="pathway name" value="RNA Polymerase II Promoter Escape"/>
</dbReference>
<dbReference type="Reactome" id="R-HSA-73779">
    <property type="pathway name" value="RNA Polymerase II Transcription Pre-Initiation And Promoter Opening"/>
</dbReference>
<dbReference type="Reactome" id="R-HSA-73780">
    <property type="pathway name" value="RNA Polymerase III Chain Elongation"/>
</dbReference>
<dbReference type="Reactome" id="R-HSA-73863">
    <property type="pathway name" value="RNA Polymerase I Transcription Termination"/>
</dbReference>
<dbReference type="Reactome" id="R-HSA-73980">
    <property type="pathway name" value="RNA Polymerase III Transcription Termination"/>
</dbReference>
<dbReference type="Reactome" id="R-HSA-749476">
    <property type="pathway name" value="RNA Polymerase III Abortive And Retractive Initiation"/>
</dbReference>
<dbReference type="Reactome" id="R-HSA-75953">
    <property type="pathway name" value="RNA Polymerase II Transcription Initiation"/>
</dbReference>
<dbReference type="Reactome" id="R-HSA-75955">
    <property type="pathway name" value="RNA Polymerase II Transcription Elongation"/>
</dbReference>
<dbReference type="Reactome" id="R-HSA-76042">
    <property type="pathway name" value="RNA Polymerase II Transcription Initiation And Promoter Clearance"/>
</dbReference>
<dbReference type="Reactome" id="R-HSA-76061">
    <property type="pathway name" value="RNA Polymerase III Transcription Initiation From Type 1 Promoter"/>
</dbReference>
<dbReference type="Reactome" id="R-HSA-76066">
    <property type="pathway name" value="RNA Polymerase III Transcription Initiation From Type 2 Promoter"/>
</dbReference>
<dbReference type="Reactome" id="R-HSA-76071">
    <property type="pathway name" value="RNA Polymerase III Transcription Initiation From Type 3 Promoter"/>
</dbReference>
<dbReference type="Reactome" id="R-HSA-77075">
    <property type="pathway name" value="RNA Pol II CTD phosphorylation and interaction with CE"/>
</dbReference>
<dbReference type="Reactome" id="R-HSA-8851708">
    <property type="pathway name" value="Signaling by FGFR2 IIIa TM"/>
</dbReference>
<dbReference type="Reactome" id="R-HSA-9018519">
    <property type="pathway name" value="Estrogen-dependent gene expression"/>
</dbReference>
<dbReference type="Reactome" id="R-HSA-9670095">
    <property type="pathway name" value="Inhibition of DNA recombination at telomere"/>
</dbReference>
<dbReference type="SignaLink" id="P61218"/>
<dbReference type="SIGNOR" id="P61218"/>
<dbReference type="BioGRID-ORCS" id="5435">
    <property type="hits" value="814 hits in 1156 CRISPR screens"/>
</dbReference>
<dbReference type="ChiTaRS" id="POLR2F">
    <property type="organism name" value="human"/>
</dbReference>
<dbReference type="EvolutionaryTrace" id="P61218"/>
<dbReference type="GeneWiki" id="POLR2F"/>
<dbReference type="GenomeRNAi" id="5435"/>
<dbReference type="Pharos" id="P61218">
    <property type="development level" value="Tbio"/>
</dbReference>
<dbReference type="PRO" id="PR:P61218"/>
<dbReference type="Proteomes" id="UP000005640">
    <property type="component" value="Chromosome 22"/>
</dbReference>
<dbReference type="RNAct" id="P61218">
    <property type="molecule type" value="protein"/>
</dbReference>
<dbReference type="Bgee" id="ENSG00000100142">
    <property type="expression patterns" value="Expressed in C1 segment of cervical spinal cord and 210 other cell types or tissues"/>
</dbReference>
<dbReference type="ExpressionAtlas" id="P61218">
    <property type="expression patterns" value="baseline and differential"/>
</dbReference>
<dbReference type="GO" id="GO:0005829">
    <property type="term" value="C:cytosol"/>
    <property type="evidence" value="ECO:0000304"/>
    <property type="project" value="Reactome"/>
</dbReference>
<dbReference type="GO" id="GO:0001650">
    <property type="term" value="C:fibrillar center"/>
    <property type="evidence" value="ECO:0000314"/>
    <property type="project" value="HPA"/>
</dbReference>
<dbReference type="GO" id="GO:0005654">
    <property type="term" value="C:nucleoplasm"/>
    <property type="evidence" value="ECO:0000314"/>
    <property type="project" value="HPA"/>
</dbReference>
<dbReference type="GO" id="GO:0005634">
    <property type="term" value="C:nucleus"/>
    <property type="evidence" value="ECO:0000314"/>
    <property type="project" value="UniProtKB"/>
</dbReference>
<dbReference type="GO" id="GO:0005736">
    <property type="term" value="C:RNA polymerase I complex"/>
    <property type="evidence" value="ECO:0000314"/>
    <property type="project" value="UniProtKB"/>
</dbReference>
<dbReference type="GO" id="GO:0005665">
    <property type="term" value="C:RNA polymerase II, core complex"/>
    <property type="evidence" value="ECO:0000314"/>
    <property type="project" value="UniProtKB"/>
</dbReference>
<dbReference type="GO" id="GO:0005666">
    <property type="term" value="C:RNA polymerase III complex"/>
    <property type="evidence" value="ECO:0000314"/>
    <property type="project" value="UniProtKB"/>
</dbReference>
<dbReference type="GO" id="GO:0003677">
    <property type="term" value="F:DNA binding"/>
    <property type="evidence" value="ECO:0007669"/>
    <property type="project" value="InterPro"/>
</dbReference>
<dbReference type="GO" id="GO:0003899">
    <property type="term" value="F:DNA-directed RNA polymerase activity"/>
    <property type="evidence" value="ECO:0007669"/>
    <property type="project" value="InterPro"/>
</dbReference>
<dbReference type="GO" id="GO:0006360">
    <property type="term" value="P:transcription by RNA polymerase I"/>
    <property type="evidence" value="ECO:0000318"/>
    <property type="project" value="GO_Central"/>
</dbReference>
<dbReference type="GO" id="GO:0006366">
    <property type="term" value="P:transcription by RNA polymerase II"/>
    <property type="evidence" value="ECO:0000314"/>
    <property type="project" value="UniProtKB"/>
</dbReference>
<dbReference type="GO" id="GO:0042797">
    <property type="term" value="P:tRNA transcription by RNA polymerase III"/>
    <property type="evidence" value="ECO:0000318"/>
    <property type="project" value="GO_Central"/>
</dbReference>
<dbReference type="FunFam" id="3.90.940.10:FF:000003">
    <property type="entry name" value="DNA-directed RNA polymerases I, II, and III subunit RPABC2"/>
    <property type="match status" value="1"/>
</dbReference>
<dbReference type="Gene3D" id="3.90.940.10">
    <property type="match status" value="1"/>
</dbReference>
<dbReference type="InterPro" id="IPR020708">
    <property type="entry name" value="DNA-dir_RNA_polK_14-18kDa_CS"/>
</dbReference>
<dbReference type="InterPro" id="IPR006110">
    <property type="entry name" value="Pol_omega/Rpo6/RPB6"/>
</dbReference>
<dbReference type="InterPro" id="IPR028363">
    <property type="entry name" value="RPB6"/>
</dbReference>
<dbReference type="InterPro" id="IPR036161">
    <property type="entry name" value="RPB6/omega-like_sf"/>
</dbReference>
<dbReference type="InterPro" id="IPR006111">
    <property type="entry name" value="Rpo6/Rpb6"/>
</dbReference>
<dbReference type="NCBIfam" id="NF002208">
    <property type="entry name" value="PRK01099.1-3"/>
    <property type="match status" value="1"/>
</dbReference>
<dbReference type="PANTHER" id="PTHR47227">
    <property type="entry name" value="DNA-DIRECTED RNA POLYMERASE SUBUNIT K"/>
    <property type="match status" value="1"/>
</dbReference>
<dbReference type="PANTHER" id="PTHR47227:SF5">
    <property type="entry name" value="DNA-DIRECTED RNA POLYMERASES I, II, AND III SUBUNIT RPABC2"/>
    <property type="match status" value="1"/>
</dbReference>
<dbReference type="Pfam" id="PF01192">
    <property type="entry name" value="RNA_pol_Rpb6"/>
    <property type="match status" value="1"/>
</dbReference>
<dbReference type="PIRSF" id="PIRSF500154">
    <property type="entry name" value="RPB6"/>
    <property type="match status" value="1"/>
</dbReference>
<dbReference type="PIRSF" id="PIRSF000778">
    <property type="entry name" value="RpoK/RPB6"/>
    <property type="match status" value="1"/>
</dbReference>
<dbReference type="SMART" id="SM01409">
    <property type="entry name" value="RNA_pol_Rpb6"/>
    <property type="match status" value="1"/>
</dbReference>
<dbReference type="SUPFAM" id="SSF63562">
    <property type="entry name" value="RPB6/omega subunit-like"/>
    <property type="match status" value="1"/>
</dbReference>
<dbReference type="PROSITE" id="PS01111">
    <property type="entry name" value="RNA_POL_K_14KD"/>
    <property type="match status" value="1"/>
</dbReference>
<gene>
    <name evidence="20" type="primary">POLR2F</name>
    <name type="synonym">POLRF</name>
</gene>
<reference key="1">
    <citation type="journal article" date="1994" name="DNA Seq.">
        <title>A 14.4 KDa acidic subunit of human RNA polymerase II with a putative leucine-zipper.</title>
        <authorList>
            <person name="Acker J."/>
            <person name="Wintzerith M."/>
            <person name="Vigneron M."/>
            <person name="Kedinger C."/>
        </authorList>
    </citation>
    <scope>NUCLEOTIDE SEQUENCE [GENOMIC DNA]</scope>
</reference>
<reference key="2">
    <citation type="journal article" date="1996" name="Genomics">
        <title>Genomic structure of the RNA polymerase II small subunit (hRPB14.4) locus (POLRF) and mapping to 22q13.1 by sequence identity.</title>
        <authorList>
            <person name="Pusch C."/>
            <person name="Wang Z."/>
            <person name="Roe B."/>
            <person name="Blin N."/>
        </authorList>
    </citation>
    <scope>NUCLEOTIDE SEQUENCE [GENOMIC DNA]</scope>
</reference>
<reference key="3">
    <citation type="journal article" date="2004" name="Genome Biol.">
        <title>A genome annotation-driven approach to cloning the human ORFeome.</title>
        <authorList>
            <person name="Collins J.E."/>
            <person name="Wright C.L."/>
            <person name="Edwards C.A."/>
            <person name="Davis M.P."/>
            <person name="Grinham J.A."/>
            <person name="Cole C.G."/>
            <person name="Goward M.E."/>
            <person name="Aguado B."/>
            <person name="Mallya M."/>
            <person name="Mokrab Y."/>
            <person name="Huckle E.J."/>
            <person name="Beare D.M."/>
            <person name="Dunham I."/>
        </authorList>
    </citation>
    <scope>NUCLEOTIDE SEQUENCE [LARGE SCALE MRNA]</scope>
</reference>
<reference key="4">
    <citation type="submission" date="2004-06" db="EMBL/GenBank/DDBJ databases">
        <title>Cloning of human full open reading frames in Gateway(TM) system entry vector (pDONR201).</title>
        <authorList>
            <person name="Ebert L."/>
            <person name="Schick M."/>
            <person name="Neubert P."/>
            <person name="Schatten R."/>
            <person name="Henze S."/>
            <person name="Korn B."/>
        </authorList>
    </citation>
    <scope>NUCLEOTIDE SEQUENCE [LARGE SCALE MRNA]</scope>
</reference>
<reference key="5">
    <citation type="journal article" date="1999" name="Nature">
        <title>The DNA sequence of human chromosome 22.</title>
        <authorList>
            <person name="Dunham I."/>
            <person name="Hunt A.R."/>
            <person name="Collins J.E."/>
            <person name="Bruskiewich R."/>
            <person name="Beare D.M."/>
            <person name="Clamp M."/>
            <person name="Smink L.J."/>
            <person name="Ainscough R."/>
            <person name="Almeida J.P."/>
            <person name="Babbage A.K."/>
            <person name="Bagguley C."/>
            <person name="Bailey J."/>
            <person name="Barlow K.F."/>
            <person name="Bates K.N."/>
            <person name="Beasley O.P."/>
            <person name="Bird C.P."/>
            <person name="Blakey S.E."/>
            <person name="Bridgeman A.M."/>
            <person name="Buck D."/>
            <person name="Burgess J."/>
            <person name="Burrill W.D."/>
            <person name="Burton J."/>
            <person name="Carder C."/>
            <person name="Carter N.P."/>
            <person name="Chen Y."/>
            <person name="Clark G."/>
            <person name="Clegg S.M."/>
            <person name="Cobley V.E."/>
            <person name="Cole C.G."/>
            <person name="Collier R.E."/>
            <person name="Connor R."/>
            <person name="Conroy D."/>
            <person name="Corby N.R."/>
            <person name="Coville G.J."/>
            <person name="Cox A.V."/>
            <person name="Davis J."/>
            <person name="Dawson E."/>
            <person name="Dhami P.D."/>
            <person name="Dockree C."/>
            <person name="Dodsworth S.J."/>
            <person name="Durbin R.M."/>
            <person name="Ellington A.G."/>
            <person name="Evans K.L."/>
            <person name="Fey J.M."/>
            <person name="Fleming K."/>
            <person name="French L."/>
            <person name="Garner A.A."/>
            <person name="Gilbert J.G.R."/>
            <person name="Goward M.E."/>
            <person name="Grafham D.V."/>
            <person name="Griffiths M.N.D."/>
            <person name="Hall C."/>
            <person name="Hall R.E."/>
            <person name="Hall-Tamlyn G."/>
            <person name="Heathcott R.W."/>
            <person name="Ho S."/>
            <person name="Holmes S."/>
            <person name="Hunt S.E."/>
            <person name="Jones M.C."/>
            <person name="Kershaw J."/>
            <person name="Kimberley A.M."/>
            <person name="King A."/>
            <person name="Laird G.K."/>
            <person name="Langford C.F."/>
            <person name="Leversha M.A."/>
            <person name="Lloyd C."/>
            <person name="Lloyd D.M."/>
            <person name="Martyn I.D."/>
            <person name="Mashreghi-Mohammadi M."/>
            <person name="Matthews L.H."/>
            <person name="Mccann O.T."/>
            <person name="Mcclay J."/>
            <person name="Mclaren S."/>
            <person name="McMurray A.A."/>
            <person name="Milne S.A."/>
            <person name="Mortimore B.J."/>
            <person name="Odell C.N."/>
            <person name="Pavitt R."/>
            <person name="Pearce A.V."/>
            <person name="Pearson D."/>
            <person name="Phillimore B.J.C.T."/>
            <person name="Phillips S.H."/>
            <person name="Plumb R.W."/>
            <person name="Ramsay H."/>
            <person name="Ramsey Y."/>
            <person name="Rogers L."/>
            <person name="Ross M.T."/>
            <person name="Scott C.E."/>
            <person name="Sehra H.K."/>
            <person name="Skuce C.D."/>
            <person name="Smalley S."/>
            <person name="Smith M.L."/>
            <person name="Soderlund C."/>
            <person name="Spragon L."/>
            <person name="Steward C.A."/>
            <person name="Sulston J.E."/>
            <person name="Swann R.M."/>
            <person name="Vaudin M."/>
            <person name="Wall M."/>
            <person name="Wallis J.M."/>
            <person name="Whiteley M.N."/>
            <person name="Willey D.L."/>
            <person name="Williams L."/>
            <person name="Williams S.A."/>
            <person name="Williamson H."/>
            <person name="Wilmer T.E."/>
            <person name="Wilming L."/>
            <person name="Wright C.L."/>
            <person name="Hubbard T."/>
            <person name="Bentley D.R."/>
            <person name="Beck S."/>
            <person name="Rogers J."/>
            <person name="Shimizu N."/>
            <person name="Minoshima S."/>
            <person name="Kawasaki K."/>
            <person name="Sasaki T."/>
            <person name="Asakawa S."/>
            <person name="Kudoh J."/>
            <person name="Shintani A."/>
            <person name="Shibuya K."/>
            <person name="Yoshizaki Y."/>
            <person name="Aoki N."/>
            <person name="Mitsuyama S."/>
            <person name="Roe B.A."/>
            <person name="Chen F."/>
            <person name="Chu L."/>
            <person name="Crabtree J."/>
            <person name="Deschamps S."/>
            <person name="Do A."/>
            <person name="Do T."/>
            <person name="Dorman A."/>
            <person name="Fang F."/>
            <person name="Fu Y."/>
            <person name="Hu P."/>
            <person name="Hua A."/>
            <person name="Kenton S."/>
            <person name="Lai H."/>
            <person name="Lao H.I."/>
            <person name="Lewis J."/>
            <person name="Lewis S."/>
            <person name="Lin S.-P."/>
            <person name="Loh P."/>
            <person name="Malaj E."/>
            <person name="Nguyen T."/>
            <person name="Pan H."/>
            <person name="Phan S."/>
            <person name="Qi S."/>
            <person name="Qian Y."/>
            <person name="Ray L."/>
            <person name="Ren Q."/>
            <person name="Shaull S."/>
            <person name="Sloan D."/>
            <person name="Song L."/>
            <person name="Wang Q."/>
            <person name="Wang Y."/>
            <person name="Wang Z."/>
            <person name="White J."/>
            <person name="Willingham D."/>
            <person name="Wu H."/>
            <person name="Yao Z."/>
            <person name="Zhan M."/>
            <person name="Zhang G."/>
            <person name="Chissoe S."/>
            <person name="Murray J."/>
            <person name="Miller N."/>
            <person name="Minx P."/>
            <person name="Fulton R."/>
            <person name="Johnson D."/>
            <person name="Bemis G."/>
            <person name="Bentley D."/>
            <person name="Bradshaw H."/>
            <person name="Bourne S."/>
            <person name="Cordes M."/>
            <person name="Du Z."/>
            <person name="Fulton L."/>
            <person name="Goela D."/>
            <person name="Graves T."/>
            <person name="Hawkins J."/>
            <person name="Hinds K."/>
            <person name="Kemp K."/>
            <person name="Latreille P."/>
            <person name="Layman D."/>
            <person name="Ozersky P."/>
            <person name="Rohlfing T."/>
            <person name="Scheet P."/>
            <person name="Walker C."/>
            <person name="Wamsley A."/>
            <person name="Wohldmann P."/>
            <person name="Pepin K."/>
            <person name="Nelson J."/>
            <person name="Korf I."/>
            <person name="Bedell J.A."/>
            <person name="Hillier L.W."/>
            <person name="Mardis E."/>
            <person name="Waterston R."/>
            <person name="Wilson R."/>
            <person name="Emanuel B.S."/>
            <person name="Shaikh T."/>
            <person name="Kurahashi H."/>
            <person name="Saitta S."/>
            <person name="Budarf M.L."/>
            <person name="McDermid H.E."/>
            <person name="Johnson A."/>
            <person name="Wong A.C.C."/>
            <person name="Morrow B.E."/>
            <person name="Edelmann L."/>
            <person name="Kim U.J."/>
            <person name="Shizuya H."/>
            <person name="Simon M.I."/>
            <person name="Dumanski J.P."/>
            <person name="Peyrard M."/>
            <person name="Kedra D."/>
            <person name="Seroussi E."/>
            <person name="Fransson I."/>
            <person name="Tapia I."/>
            <person name="Bruder C.E."/>
            <person name="O'Brien K.P."/>
            <person name="Wilkinson P."/>
            <person name="Bodenteich A."/>
            <person name="Hartman K."/>
            <person name="Hu X."/>
            <person name="Khan A.S."/>
            <person name="Lane L."/>
            <person name="Tilahun Y."/>
            <person name="Wright H."/>
        </authorList>
    </citation>
    <scope>NUCLEOTIDE SEQUENCE [LARGE SCALE GENOMIC DNA]</scope>
</reference>
<reference key="6">
    <citation type="submission" date="2005-07" db="EMBL/GenBank/DDBJ databases">
        <authorList>
            <person name="Mural R.J."/>
            <person name="Istrail S."/>
            <person name="Sutton G.G."/>
            <person name="Florea L."/>
            <person name="Halpern A.L."/>
            <person name="Mobarry C.M."/>
            <person name="Lippert R."/>
            <person name="Walenz B."/>
            <person name="Shatkay H."/>
            <person name="Dew I."/>
            <person name="Miller J.R."/>
            <person name="Flanigan M.J."/>
            <person name="Edwards N.J."/>
            <person name="Bolanos R."/>
            <person name="Fasulo D."/>
            <person name="Halldorsson B.V."/>
            <person name="Hannenhalli S."/>
            <person name="Turner R."/>
            <person name="Yooseph S."/>
            <person name="Lu F."/>
            <person name="Nusskern D.R."/>
            <person name="Shue B.C."/>
            <person name="Zheng X.H."/>
            <person name="Zhong F."/>
            <person name="Delcher A.L."/>
            <person name="Huson D.H."/>
            <person name="Kravitz S.A."/>
            <person name="Mouchard L."/>
            <person name="Reinert K."/>
            <person name="Remington K.A."/>
            <person name="Clark A.G."/>
            <person name="Waterman M.S."/>
            <person name="Eichler E.E."/>
            <person name="Adams M.D."/>
            <person name="Hunkapiller M.W."/>
            <person name="Myers E.W."/>
            <person name="Venter J.C."/>
        </authorList>
    </citation>
    <scope>NUCLEOTIDE SEQUENCE [LARGE SCALE GENOMIC DNA]</scope>
</reference>
<reference key="7">
    <citation type="journal article" date="2004" name="Genome Res.">
        <title>The status, quality, and expansion of the NIH full-length cDNA project: the Mammalian Gene Collection (MGC).</title>
        <authorList>
            <consortium name="The MGC Project Team"/>
        </authorList>
    </citation>
    <scope>NUCLEOTIDE SEQUENCE [LARGE SCALE MRNA]</scope>
    <source>
        <tissue>Placenta</tissue>
    </source>
</reference>
<reference key="8">
    <citation type="journal article" date="1998" name="J. Biol. Chem.">
        <title>Immunoaffinity purification and functional characterization of human transcription factor IIH and RNA polymerase II from clonal cell lines that conditionally express epitope-tagged subunits of the multiprotein complexes.</title>
        <authorList>
            <person name="Kershnar E."/>
            <person name="Wu S.-Y."/>
            <person name="Chiang C.-M."/>
        </authorList>
    </citation>
    <scope>FUNCTION</scope>
    <scope>IDENTIFICATION IN THE RNA POLYMERASE II CORE-COMPLEX</scope>
    <scope>SUBCELLULAR LOCATION</scope>
</reference>
<reference key="9">
    <citation type="journal article" date="2010" name="Genome Res.">
        <title>Defining the RNA polymerase III transcriptome: Genome-wide localization of the RNA polymerase III transcription machinery in human cells.</title>
        <authorList>
            <person name="Canella D."/>
            <person name="Praz V."/>
            <person name="Reina J.H."/>
            <person name="Cousin P."/>
            <person name="Hernandez N."/>
        </authorList>
    </citation>
    <scope>FUNCTION OF POL III</scope>
</reference>
<reference key="10">
    <citation type="journal article" date="2010" name="Sci. Signal.">
        <title>Quantitative phosphoproteomics reveals widespread full phosphorylation site occupancy during mitosis.</title>
        <authorList>
            <person name="Olsen J.V."/>
            <person name="Vermeulen M."/>
            <person name="Santamaria A."/>
            <person name="Kumar C."/>
            <person name="Miller M.L."/>
            <person name="Jensen L.J."/>
            <person name="Gnad F."/>
            <person name="Cox J."/>
            <person name="Jensen T.S."/>
            <person name="Nigg E.A."/>
            <person name="Brunak S."/>
            <person name="Mann M."/>
        </authorList>
    </citation>
    <scope>ACETYLATION [LARGE SCALE ANALYSIS] AT SER-2</scope>
    <scope>CLEAVAGE OF INITIATOR METHIONINE [LARGE SCALE ANALYSIS]</scope>
    <scope>IDENTIFICATION BY MASS SPECTROMETRY [LARGE SCALE ANALYSIS]</scope>
    <source>
        <tissue>Cervix carcinoma</tissue>
    </source>
</reference>
<reference key="11">
    <citation type="journal article" date="2014" name="J. Proteomics">
        <title>An enzyme assisted RP-RPLC approach for in-depth analysis of human liver phosphoproteome.</title>
        <authorList>
            <person name="Bian Y."/>
            <person name="Song C."/>
            <person name="Cheng K."/>
            <person name="Dong M."/>
            <person name="Wang F."/>
            <person name="Huang J."/>
            <person name="Sun D."/>
            <person name="Wang L."/>
            <person name="Ye M."/>
            <person name="Zou H."/>
        </authorList>
    </citation>
    <scope>IDENTIFICATION BY MASS SPECTROMETRY [LARGE SCALE ANALYSIS]</scope>
    <source>
        <tissue>Liver</tissue>
    </source>
</reference>
<reference key="12">
    <citation type="journal article" date="1999" name="Nat. Struct. Biol.">
        <title>Solution structure of the hRPABC14.4 subunit of human RNA polymerases.</title>
        <authorList>
            <person name="del Rio-Portilla F."/>
            <person name="Gaskell A."/>
            <person name="Gilbert D."/>
            <person name="Ladias J.A."/>
            <person name="Wagner G."/>
        </authorList>
    </citation>
    <scope>STRUCTURE BY NMR</scope>
</reference>
<reference key="13">
    <citation type="journal article" date="2016" name="Nature">
        <title>Near-atomic resolution visualization of human transcription promoter opening.</title>
        <authorList>
            <person name="He Y."/>
            <person name="Yan C."/>
            <person name="Fang J."/>
            <person name="Inouye C."/>
            <person name="Tjian R."/>
            <person name="Ivanov I."/>
            <person name="Nogales E."/>
        </authorList>
    </citation>
    <scope>STRUCTURE BY ELECTRON MICROSCOPY (3.90 ANGSTROMS)</scope>
    <scope>FUNCTION OF POL II</scope>
    <scope>SUBUNIT</scope>
</reference>
<reference key="14">
    <citation type="journal article" date="2018" name="Nat. Struct. Mol. Biol.">
        <title>Architecture of Pol II(G) and molecular mechanism of transcription regulation by Gdown1.</title>
        <authorList>
            <person name="Jishage M."/>
            <person name="Yu X."/>
            <person name="Shi Y."/>
            <person name="Ganesan S.J."/>
            <person name="Chen W.Y."/>
            <person name="Sali A."/>
            <person name="Chait B.T."/>
            <person name="Asturias F.J."/>
            <person name="Roeder R.G."/>
        </authorList>
    </citation>
    <scope>STRUCTURE BY ELECTRON MICROSCOPY (3.90 ANGSTROMS)</scope>
    <scope>FUNCTION OF POL II</scope>
    <scope>SUBUNIT</scope>
</reference>
<reference key="15">
    <citation type="journal article" date="2020" name="Nat. Commun.">
        <title>Structure of human RNA polymerase III.</title>
        <authorList>
            <person name="Ramsay E.P."/>
            <person name="Abascal-Palacios G."/>
            <person name="Daiss J.L."/>
            <person name="King H."/>
            <person name="Gouge J."/>
            <person name="Pilsl M."/>
            <person name="Beuron F."/>
            <person name="Morris E."/>
            <person name="Gunkel P."/>
            <person name="Engel C."/>
            <person name="Vannini A."/>
        </authorList>
    </citation>
    <scope>STRUCTURE BY ELECTRON MICROSCOPY (4.00 ANGSTROMS)</scope>
    <scope>SUBUNIT</scope>
    <scope>SUBCELLULAR LOCATION</scope>
</reference>
<reference key="16">
    <citation type="journal article" date="2021" name="Cell Discov.">
        <title>Structure of the human RNA polymerase I elongation complex.</title>
        <authorList>
            <person name="Zhao D."/>
            <person name="Liu W."/>
            <person name="Chen K."/>
            <person name="Wu Z."/>
            <person name="Yang H."/>
            <person name="Xu Y."/>
        </authorList>
    </citation>
    <scope>STRUCTURE BY ELECTRON MICROSCOPY (2.81 ANGSTROMS)</scope>
    <scope>FUNCTION OF POL I</scope>
    <scope>SUBUNIT</scope>
</reference>
<reference key="17">
    <citation type="journal article" date="2021" name="Cell Res.">
        <title>Structure of human RNA polymerase III elongation complex.</title>
        <authorList>
            <person name="Li L."/>
            <person name="Yu Z."/>
            <person name="Zhao D."/>
            <person name="Ren Y."/>
            <person name="Hou H."/>
            <person name="Xu Y."/>
        </authorList>
    </citation>
    <scope>STRUCTURE BY ELECTRON MICROSCOPY (3.35 ANGSTROMS)</scope>
    <scope>SUBUNIT</scope>
</reference>
<reference key="18">
    <citation type="journal article" date="2021" name="Nat. Commun.">
        <title>Structural insights into RNA polymerase III-mediated transcription termination through trapping poly-deoxythymidine.</title>
        <authorList>
            <person name="Hou H."/>
            <person name="Li Y."/>
            <person name="Wang M."/>
            <person name="Liu A."/>
            <person name="Yu Z."/>
            <person name="Chen K."/>
            <person name="Zhao D."/>
            <person name="Xu Y."/>
        </authorList>
    </citation>
    <scope>STRUCTURE BY ELECTRON MICROSCOPY (3.60 ANGSTROMS)</scope>
    <scope>SUBUNIT</scope>
</reference>
<reference key="19">
    <citation type="journal article" date="2021" name="Nat. Struct. Mol. Biol.">
        <title>Cryo-EM structures of human RNA polymerase III in its unbound and transcribing states.</title>
        <authorList>
            <person name="Girbig M."/>
            <person name="Misiaszek A.D."/>
            <person name="Vorlander M.K."/>
            <person name="Lafita A."/>
            <person name="Grotsch H."/>
            <person name="Baudin F."/>
            <person name="Bateman A."/>
            <person name="Muller C.W."/>
        </authorList>
    </citation>
    <scope>STRUCTURE BY ELECTRON MICROSCOPY (2.80 ANGSTROMS)</scope>
    <scope>SUBUNIT</scope>
</reference>
<reference key="20">
    <citation type="journal article" date="2021" name="Nat. Struct. Mol. Biol.">
        <title>Cryo-EM structures of human RNA polymerase I.</title>
        <authorList>
            <person name="Misiaszek A.D."/>
            <person name="Girbig M."/>
            <person name="Grotsch H."/>
            <person name="Baudin F."/>
            <person name="Murciano B."/>
            <person name="Lafita A."/>
            <person name="Muller C.W."/>
        </authorList>
    </citation>
    <scope>STRUCTURE BY ELECTRON MICROSCOPY (2.70 ANGSTROMS)</scope>
    <scope>FUNCTION OF POL I</scope>
    <scope>SUBUNIT</scope>
    <scope>SUBCELLULAR LOCATION</scope>
</reference>
<reference key="21">
    <citation type="journal article" date="2021" name="Nat. Struct. Mol. Biol.">
        <title>Structural insights into transcriptional regulation of human RNA polymerase III.</title>
        <authorList>
            <person name="Wang Q."/>
            <person name="Li S."/>
            <person name="Wan F."/>
            <person name="Xu Y."/>
            <person name="Wu Z."/>
            <person name="Cao M."/>
            <person name="Lan P."/>
            <person name="Lei M."/>
            <person name="Wu J."/>
        </authorList>
    </citation>
    <scope>STRUCTURE BY ELECTRON MICROSCOPY (2.90 ANGSTROMS)</scope>
    <scope>SUBUNIT</scope>
</reference>
<reference key="22">
    <citation type="journal article" date="2022" name="Life. Sci Alliance">
        <title>The human RNA polymerase I structure reveals an HMG-like docking domain specific to metazoans.</title>
        <authorList>
            <person name="Daiss J.L."/>
            <person name="Pilsl M."/>
            <person name="Straub K."/>
            <person name="Bleckmann A."/>
            <person name="Hocherl M."/>
            <person name="Heiss F.B."/>
            <person name="Abascal-Palacios G."/>
            <person name="Ramsay E.P."/>
            <person name="Tluckova K."/>
            <person name="Mars J.C."/>
            <person name="Furtges T."/>
            <person name="Bruckmann A."/>
            <person name="Rudack T."/>
            <person name="Bernecky C."/>
            <person name="Lamour V."/>
            <person name="Panov K."/>
            <person name="Vannini A."/>
            <person name="Moss T."/>
            <person name="Engel C."/>
        </authorList>
    </citation>
    <scope>STRUCTURE BY ELECTRON MICROSCOPY (4.09 ANGSTROMS)</scope>
    <scope>FUNCTION OF POL I</scope>
    <scope>SUBUNIT</scope>
    <scope>SUBCELLULAR LOCATION</scope>
</reference>
<reference key="23">
    <citation type="journal article" date="2006" name="Science">
        <title>The consensus coding sequences of human breast and colorectal cancers.</title>
        <authorList>
            <person name="Sjoeblom T."/>
            <person name="Jones S."/>
            <person name="Wood L.D."/>
            <person name="Parsons D.W."/>
            <person name="Lin J."/>
            <person name="Barber T.D."/>
            <person name="Mandelker D."/>
            <person name="Leary R.J."/>
            <person name="Ptak J."/>
            <person name="Silliman N."/>
            <person name="Szabo S."/>
            <person name="Buckhaults P."/>
            <person name="Farrell C."/>
            <person name="Meeh P."/>
            <person name="Markowitz S.D."/>
            <person name="Willis J."/>
            <person name="Dawson D."/>
            <person name="Willson J.K.V."/>
            <person name="Gazdar A.F."/>
            <person name="Hartigan J."/>
            <person name="Wu L."/>
            <person name="Liu C."/>
            <person name="Parmigiani G."/>
            <person name="Park B.H."/>
            <person name="Bachman K.E."/>
            <person name="Papadopoulos N."/>
            <person name="Vogelstein B."/>
            <person name="Kinzler K.W."/>
            <person name="Velculescu V.E."/>
        </authorList>
    </citation>
    <scope>VARIANT [LARGE SCALE ANALYSIS] ASN-60</scope>
</reference>
<comment type="function">
    <text evidence="2 5 6 7 12 14 15 16">DNA-dependent RNA polymerase catalyzes the transcription of DNA into RNA using the four ribonucleoside triphosphates as substrates. Common component of RNA polymerases I, II, and III which synthesize ribosomal RNA precursors, mRNA precursors and many functional non-coding RNAs, and small RNAs, such as 5S rRNA and tRNAs, respectively. Pol II is the central component of the basal RNA polymerase II transcription machinery. Pols are composed of mobile elements that move relative to each other. In Pol II, POLR2F/RPABC2 is part of the clamp element and together with parts of POLR2A/RPB1 and POLR2B/RPB2 forms a pocket to which the POLR2D/RPB4-POLR2G/RPB7 subcomplex binds.</text>
</comment>
<comment type="subunit">
    <text evidence="6 7 8 9 10 11 12 13 14 15">Component of the RNA polymerase I (Pol I), RNA polymerase II (Pol II) and RNA polymerase III (Pol III) complexes consisting of at least 13, 12 and 17 subunits, respectively (PubMed:27193682, PubMed:30190596, PubMed:34671025, PubMed:34887565, PubMed:36271492). Pol I complex consists of a ten-subunit catalytic core composed of POLR1A/RPA1, POLR1B/RPA2, POLR1C/RPAC1, POLR1D/RPAC2, POLR1H/RPA12, POLR2E/RPABC1, POLR2F/RPABC2, POLR2H/RPABC3, POLR2K/RPABC4 and POLR2L/RPABC5; a mobile stalk subunit POLR1F/RPA43 protruding from the core and additional subunits homologous to general transcription factors POLR1E/RPA49 and POLR1G/RPA34. Part of Pol I pre-initiation complex (PIC), in which Pol I core assembles with RRN3 and promoter-bound UTBF and SL1/TIF-IB complex (PubMed:34671025, PubMed:34887565, PubMed:36271492). Pol II complex contains a ten-subunit catalytic core composed of POLR2A/RPB1, POLR2B/RPB2, POLR2C/RPB3, POLR2I/RPB9, POLR2J/RPB11, POLR2E/RPABC1, POLR2F/RPABC2, POLR2H/RPABC3, POLR2K/RPABC4 and POLR2L/RPABC5 and a mobile stalk composed of two subunits POLR2D/RPB4 and POLR2G/RPB7. Part of Pol II(G) complex, in which Pol II core associates with an additional subunit POLR2M; unlike conventional Pol II, Pol II(G) functions as a transcriptional repressor. Part of TBP-based Pol II pre-initiation complex (PIC), in which Pol II core assembles with general transcription factors and other specific initiation factors including GTF2E1, GTF2E2, GTF2F1, GTF2F2, TCEA1, ERCC2, ERCC3, GTF2H2, GTF2H3, GTF2H4, GTF2H5, GTF2A1, GTF2A2, GTF2B and TBP; this large multi-subunit PIC complex mediates DNA unwinding and targets Pol II core to the transcription start site where the first phosphodiester bond forms (PubMed:27193682, PubMed:30190596). Pol III complex consists of a ten-subunit catalytic core composed of POLR3A/RPC1, POLR3B/RPC2, POLR1C/RPAC1, POLR1D/RPAC2, POLR3K/RPC10, POLR2E/RPABC1, POLR2F/RPABC2, POLR2H/RPABC3, POLR2K/RPABC4 and POLR2L/RPABC5; a mobile stalk composed of two subunits POLR3H/RPC8 and CRCP/RPC9, protruding from the core and functioning primarily in transcription initiation; and additional subunits homologous to general transcription factors of the RNA polymerase II machinery, POLR3C/RPC3-POLR3F/RPC6-POLR3G/RPC7 heterotrimer required for transcription initiation and POLR3D/RPC4-POLR3E/RPC5 heterodimer involved in both transcription initiation and termination.</text>
</comment>
<comment type="subcellular location">
    <subcellularLocation>
        <location evidence="8 16">Nucleus</location>
    </subcellularLocation>
    <subcellularLocation>
        <location evidence="18 19">Nucleus</location>
        <location evidence="18 19">Nucleolus</location>
    </subcellularLocation>
</comment>
<comment type="similarity">
    <text evidence="17">Belongs to the archaeal Rpo6/eukaryotic RPB6 RNA polymerase subunit family.</text>
</comment>
<evidence type="ECO:0000250" key="1">
    <source>
        <dbReference type="UniProtKB" id="O88828"/>
    </source>
</evidence>
<evidence type="ECO:0000250" key="2">
    <source>
        <dbReference type="UniProtKB" id="P20435"/>
    </source>
</evidence>
<evidence type="ECO:0000256" key="3">
    <source>
        <dbReference type="SAM" id="MobiDB-lite"/>
    </source>
</evidence>
<evidence type="ECO:0000269" key="4">
    <source>
    </source>
</evidence>
<evidence type="ECO:0000269" key="5">
    <source>
    </source>
</evidence>
<evidence type="ECO:0000269" key="6">
    <source>
    </source>
</evidence>
<evidence type="ECO:0000269" key="7">
    <source>
    </source>
</evidence>
<evidence type="ECO:0000269" key="8">
    <source>
    </source>
</evidence>
<evidence type="ECO:0000269" key="9">
    <source>
    </source>
</evidence>
<evidence type="ECO:0000269" key="10">
    <source>
    </source>
</evidence>
<evidence type="ECO:0000269" key="11">
    <source>
    </source>
</evidence>
<evidence type="ECO:0000269" key="12">
    <source>
    </source>
</evidence>
<evidence type="ECO:0000269" key="13">
    <source>
    </source>
</evidence>
<evidence type="ECO:0000269" key="14">
    <source>
    </source>
</evidence>
<evidence type="ECO:0000269" key="15">
    <source>
    </source>
</evidence>
<evidence type="ECO:0000269" key="16">
    <source>
    </source>
</evidence>
<evidence type="ECO:0000305" key="17"/>
<evidence type="ECO:0000305" key="18">
    <source>
    </source>
</evidence>
<evidence type="ECO:0000305" key="19">
    <source>
    </source>
</evidence>
<evidence type="ECO:0000312" key="20">
    <source>
        <dbReference type="HGNC" id="HGNC:9193"/>
    </source>
</evidence>
<evidence type="ECO:0007744" key="21">
    <source>
    </source>
</evidence>
<evidence type="ECO:0007829" key="22">
    <source>
        <dbReference type="PDB" id="1QKL"/>
    </source>
</evidence>
<evidence type="ECO:0007829" key="23">
    <source>
        <dbReference type="PDB" id="7D58"/>
    </source>
</evidence>
<evidence type="ECO:0007829" key="24">
    <source>
        <dbReference type="PDB" id="7DTH"/>
    </source>
</evidence>
<evidence type="ECO:0007829" key="25">
    <source>
        <dbReference type="PDB" id="7DTI"/>
    </source>
</evidence>
<evidence type="ECO:0007829" key="26">
    <source>
        <dbReference type="PDB" id="7OB9"/>
    </source>
</evidence>